<comment type="function">
    <text>Destroys radicals which are normally produced within the cells and which are toxic to biological systems.</text>
</comment>
<comment type="catalytic activity">
    <reaction>
        <text>2 superoxide + 2 H(+) = H2O2 + O2</text>
        <dbReference type="Rhea" id="RHEA:20696"/>
        <dbReference type="ChEBI" id="CHEBI:15378"/>
        <dbReference type="ChEBI" id="CHEBI:15379"/>
        <dbReference type="ChEBI" id="CHEBI:16240"/>
        <dbReference type="ChEBI" id="CHEBI:18421"/>
        <dbReference type="EC" id="1.15.1.1"/>
    </reaction>
</comment>
<comment type="cofactor">
    <cofactor>
        <name>Cu cation</name>
        <dbReference type="ChEBI" id="CHEBI:23378"/>
    </cofactor>
    <text>Binds 1 copper ion per subunit.</text>
</comment>
<comment type="cofactor">
    <cofactor>
        <name>Zn(2+)</name>
        <dbReference type="ChEBI" id="CHEBI:29105"/>
    </cofactor>
    <text>Binds 1 zinc ion per subunit.</text>
</comment>
<comment type="subunit">
    <text>Homodimer.</text>
</comment>
<comment type="subcellular location">
    <subcellularLocation>
        <location>Cytoplasm</location>
    </subcellularLocation>
    <subcellularLocation>
        <location evidence="1">Nucleus</location>
    </subcellularLocation>
</comment>
<comment type="similarity">
    <text evidence="4">Belongs to the Cu-Zn superoxide dismutase family.</text>
</comment>
<accession>P81036</accession>
<keyword id="KW-0049">Antioxidant</keyword>
<keyword id="KW-0186">Copper</keyword>
<keyword id="KW-0963">Cytoplasm</keyword>
<keyword id="KW-0903">Direct protein sequencing</keyword>
<keyword id="KW-0449">Lipoprotein</keyword>
<keyword id="KW-0479">Metal-binding</keyword>
<keyword id="KW-0539">Nucleus</keyword>
<keyword id="KW-0560">Oxidoreductase</keyword>
<keyword id="KW-0564">Palmitate</keyword>
<keyword id="KW-0862">Zinc</keyword>
<gene>
    <name type="primary">sod1</name>
</gene>
<reference key="1">
    <citation type="journal article" date="1997" name="Comp. Biochem. Physiol.">
        <title>Characterization of Cu,Zn superoxide dismutase from the bathophile fish, Lampanyctus crocodilus.</title>
        <authorList>
            <person name="Capo C."/>
            <person name="Stroppolo M.E."/>
            <person name="Galtieri A."/>
            <person name="Lania A."/>
            <person name="Costanzo S."/>
            <person name="Petruzzelli R."/>
            <person name="Calabrese L."/>
            <person name="Polticelli F."/>
            <person name="Desideri A."/>
        </authorList>
    </citation>
    <scope>PROTEIN SEQUENCE OF 2-139</scope>
</reference>
<organism>
    <name type="scientific">Lampanyctus crocodilus</name>
    <name type="common">Jewel lanternfish</name>
    <name type="synonym">Gasteropelecus crocodilus</name>
    <dbReference type="NCBI Taxonomy" id="71160"/>
    <lineage>
        <taxon>Eukaryota</taxon>
        <taxon>Metazoa</taxon>
        <taxon>Chordata</taxon>
        <taxon>Craniata</taxon>
        <taxon>Vertebrata</taxon>
        <taxon>Euteleostomi</taxon>
        <taxon>Actinopterygii</taxon>
        <taxon>Neopterygii</taxon>
        <taxon>Teleostei</taxon>
        <taxon>Neoteleostei</taxon>
        <taxon>Myctophata</taxon>
        <taxon>Myctophiformes</taxon>
        <taxon>Myctophidae</taxon>
        <taxon>Lampanyctus</taxon>
    </lineage>
</organism>
<protein>
    <recommendedName>
        <fullName>Superoxide dismutase [Cu-Zn]</fullName>
        <ecNumber>1.15.1.1</ecNumber>
    </recommendedName>
</protein>
<sequence>MVKAVCVLKGTTGEVTGTVYFEQESDSAPVKLTGQIIGLAPGLHGFHVHAFGDNTNXXXXXXXXXXXXXXTHAGPTDKDRHVGDLGNVAKIDITDKMLTLNGPLSIIGRTMVIHEKADDLGKGGNDESLKTGNAGGRMA</sequence>
<dbReference type="EC" id="1.15.1.1"/>
<dbReference type="GO" id="GO:0005737">
    <property type="term" value="C:cytoplasm"/>
    <property type="evidence" value="ECO:0007669"/>
    <property type="project" value="UniProtKB-SubCell"/>
</dbReference>
<dbReference type="GO" id="GO:0005634">
    <property type="term" value="C:nucleus"/>
    <property type="evidence" value="ECO:0007669"/>
    <property type="project" value="UniProtKB-SubCell"/>
</dbReference>
<dbReference type="GO" id="GO:0005507">
    <property type="term" value="F:copper ion binding"/>
    <property type="evidence" value="ECO:0007669"/>
    <property type="project" value="InterPro"/>
</dbReference>
<dbReference type="GO" id="GO:0004784">
    <property type="term" value="F:superoxide dismutase activity"/>
    <property type="evidence" value="ECO:0007669"/>
    <property type="project" value="UniProtKB-EC"/>
</dbReference>
<dbReference type="CDD" id="cd00305">
    <property type="entry name" value="Cu-Zn_Superoxide_Dismutase"/>
    <property type="match status" value="1"/>
</dbReference>
<dbReference type="Gene3D" id="2.60.40.200">
    <property type="entry name" value="Superoxide dismutase, copper/zinc binding domain"/>
    <property type="match status" value="1"/>
</dbReference>
<dbReference type="InterPro" id="IPR036423">
    <property type="entry name" value="SOD-like_Cu/Zn_dom_sf"/>
</dbReference>
<dbReference type="InterPro" id="IPR024134">
    <property type="entry name" value="SOD_Cu/Zn_/chaperone"/>
</dbReference>
<dbReference type="InterPro" id="IPR018152">
    <property type="entry name" value="SOD_Cu/Zn_BS"/>
</dbReference>
<dbReference type="InterPro" id="IPR001424">
    <property type="entry name" value="SOD_Cu_Zn_dom"/>
</dbReference>
<dbReference type="PANTHER" id="PTHR10003">
    <property type="entry name" value="SUPEROXIDE DISMUTASE CU-ZN -RELATED"/>
    <property type="match status" value="1"/>
</dbReference>
<dbReference type="Pfam" id="PF00080">
    <property type="entry name" value="Sod_Cu"/>
    <property type="match status" value="1"/>
</dbReference>
<dbReference type="PRINTS" id="PR00068">
    <property type="entry name" value="CUZNDISMTASE"/>
</dbReference>
<dbReference type="SUPFAM" id="SSF49329">
    <property type="entry name" value="Cu,Zn superoxide dismutase-like"/>
    <property type="match status" value="1"/>
</dbReference>
<dbReference type="PROSITE" id="PS00087">
    <property type="entry name" value="SOD_CU_ZN_1"/>
    <property type="match status" value="1"/>
</dbReference>
<proteinExistence type="evidence at protein level"/>
<evidence type="ECO:0000250" key="1"/>
<evidence type="ECO:0000256" key="2">
    <source>
        <dbReference type="SAM" id="MobiDB-lite"/>
    </source>
</evidence>
<evidence type="ECO:0000269" key="3">
    <source>
    </source>
</evidence>
<evidence type="ECO:0000305" key="4"/>
<name>SODC_LAMCR</name>
<feature type="initiator methionine" description="Removed" evidence="3">
    <location>
        <position position="1"/>
    </location>
</feature>
<feature type="chain" id="PRO_0000164072" description="Superoxide dismutase [Cu-Zn]">
    <location>
        <begin position="2"/>
        <end position="139" status="greater than"/>
    </location>
</feature>
<feature type="region of interest" description="Disordered" evidence="2">
    <location>
        <begin position="118"/>
        <end position="139"/>
    </location>
</feature>
<feature type="compositionally biased region" description="Basic and acidic residues" evidence="2">
    <location>
        <begin position="118"/>
        <end position="129"/>
    </location>
</feature>
<feature type="binding site">
    <location>
        <position position="47"/>
    </location>
    <ligand>
        <name>Cu cation</name>
        <dbReference type="ChEBI" id="CHEBI:23378"/>
        <note>catalytic</note>
    </ligand>
</feature>
<feature type="binding site">
    <location>
        <position position="49"/>
    </location>
    <ligand>
        <name>Cu cation</name>
        <dbReference type="ChEBI" id="CHEBI:23378"/>
        <note>catalytic</note>
    </ligand>
</feature>
<feature type="binding site">
    <location>
        <position position="72"/>
    </location>
    <ligand>
        <name>Zn(2+)</name>
        <dbReference type="ChEBI" id="CHEBI:29105"/>
        <note>structural</note>
    </ligand>
</feature>
<feature type="binding site">
    <location>
        <position position="81"/>
    </location>
    <ligand>
        <name>Zn(2+)</name>
        <dbReference type="ChEBI" id="CHEBI:29105"/>
        <note>structural</note>
    </ligand>
</feature>
<feature type="binding site">
    <location>
        <position position="84"/>
    </location>
    <ligand>
        <name>Zn(2+)</name>
        <dbReference type="ChEBI" id="CHEBI:29105"/>
        <note>structural</note>
    </ligand>
</feature>
<feature type="binding site">
    <location>
        <position position="114"/>
    </location>
    <ligand>
        <name>Cu cation</name>
        <dbReference type="ChEBI" id="CHEBI:23378"/>
        <note>catalytic</note>
    </ligand>
</feature>
<feature type="lipid moiety-binding region" description="S-palmitoyl cysteine" evidence="1">
    <location>
        <position position="6"/>
    </location>
</feature>
<feature type="non-terminal residue">
    <location>
        <position position="139"/>
    </location>
</feature>